<proteinExistence type="inferred from homology"/>
<accession>P17583</accession>
<accession>P71308</accession>
<accession>P75695</accession>
<accession>Q2MC83</accession>
<keyword id="KW-0997">Cell inner membrane</keyword>
<keyword id="KW-1003">Cell membrane</keyword>
<keyword id="KW-0472">Membrane</keyword>
<keyword id="KW-1185">Reference proteome</keyword>
<keyword id="KW-0812">Transmembrane</keyword>
<keyword id="KW-1133">Transmembrane helix</keyword>
<keyword id="KW-0813">Transport</keyword>
<gene>
    <name type="primary">cynX</name>
    <name type="ordered locus">b0341</name>
    <name type="ordered locus">JW0332</name>
</gene>
<sequence length="384" mass="41361">MLLVLVLIGLNMRPLLTSVGPLLPQLRQASGMSFSVAALLTALPVVTMGGLALAGSWLHQHVSERRSVAISLLLIAVGALMRELYPQSALLLSSALLGGVGIGIIQAVMPSVIKRRFQQRTPLVMGLWSAALMGGGGLGAAITPWLVQHSETWYQTLAWWALPAVVALFAWWWQSAREVASSHKTTTTPVRVVFTPRAWTLGVYFGLINGGYASLIAWLPAFYIEIGASAQYSGSLLALMTLGQAAGALLMPAMARHQDRRKLLMLALVLQLVGFCGFIWLPMQLPVLWAMVCGLGLGGAFPLCLLLALDHSVQPAIAGKLVAFMQGIGFIIAGLAPWFSGVLRSISGNYLMDWAFHALCVVGLMIITLRFAPVRFPQLWVKEA</sequence>
<comment type="function">
    <text>This protein is part of an active transport system that transports exogenous cyanate into E.coli cells.</text>
</comment>
<comment type="subcellular location">
    <subcellularLocation>
        <location evidence="2">Cell inner membrane</location>
        <topology evidence="2">Multi-pass membrane protein</topology>
    </subcellularLocation>
</comment>
<comment type="similarity">
    <text evidence="3">Belongs to the major facilitator superfamily. Cyanate porter (TC 2.A.1.17) family.</text>
</comment>
<comment type="sequence caution" evidence="3">
    <conflict type="erroneous initiation">
        <sequence resource="EMBL-CDS" id="AAB18065"/>
    </conflict>
</comment>
<protein>
    <recommendedName>
        <fullName>Cyanate transport protein CynX</fullName>
    </recommendedName>
</protein>
<evidence type="ECO:0000255" key="1"/>
<evidence type="ECO:0000269" key="2">
    <source>
    </source>
</evidence>
<evidence type="ECO:0000305" key="3"/>
<name>CYNX_ECOLI</name>
<feature type="chain" id="PRO_0000205707" description="Cyanate transport protein CynX">
    <location>
        <begin position="1"/>
        <end position="384"/>
    </location>
</feature>
<feature type="transmembrane region" description="Helical" evidence="1">
    <location>
        <begin position="3"/>
        <end position="23"/>
    </location>
</feature>
<feature type="transmembrane region" description="Helical" evidence="1">
    <location>
        <begin position="34"/>
        <end position="54"/>
    </location>
</feature>
<feature type="transmembrane region" description="Helical" evidence="1">
    <location>
        <begin position="68"/>
        <end position="88"/>
    </location>
</feature>
<feature type="transmembrane region" description="Helical" evidence="1">
    <location>
        <begin position="89"/>
        <end position="109"/>
    </location>
</feature>
<feature type="transmembrane region" description="Helical" evidence="1">
    <location>
        <begin position="122"/>
        <end position="142"/>
    </location>
</feature>
<feature type="transmembrane region" description="Helical" evidence="1">
    <location>
        <begin position="153"/>
        <end position="173"/>
    </location>
</feature>
<feature type="transmembrane region" description="Helical" evidence="1">
    <location>
        <begin position="204"/>
        <end position="224"/>
    </location>
</feature>
<feature type="transmembrane region" description="Helical" evidence="1">
    <location>
        <begin position="235"/>
        <end position="255"/>
    </location>
</feature>
<feature type="transmembrane region" description="Helical" evidence="1">
    <location>
        <begin position="263"/>
        <end position="283"/>
    </location>
</feature>
<feature type="transmembrane region" description="Helical" evidence="1">
    <location>
        <begin position="287"/>
        <end position="307"/>
    </location>
</feature>
<feature type="transmembrane region" description="Helical" evidence="1">
    <location>
        <begin position="322"/>
        <end position="342"/>
    </location>
</feature>
<feature type="transmembrane region" description="Helical" evidence="1">
    <location>
        <begin position="354"/>
        <end position="374"/>
    </location>
</feature>
<feature type="sequence conflict" description="In Ref. 1; AAA23627." evidence="3" ref="1">
    <original>R</original>
    <variation>A</variation>
    <location>
        <position position="27"/>
    </location>
</feature>
<feature type="sequence conflict" description="In Ref. 1." evidence="3" ref="1">
    <original>APWFSGVLRSISGNYLMDWAFHALCVVGLMIITLRFAPVRFPQLWVKEA</original>
    <variation>PRGFLACCVVSAAIT</variation>
    <location>
        <begin position="336"/>
        <end position="384"/>
    </location>
</feature>
<reference key="1">
    <citation type="journal article" date="1988" name="J. Biol. Chem.">
        <title>Characterization of the cyn operon in Escherichia coli K12.</title>
        <authorList>
            <person name="Sung Y.-C."/>
            <person name="Fuchs J.A."/>
        </authorList>
    </citation>
    <scope>NUCLEOTIDE SEQUENCE [GENOMIC DNA]</scope>
    <source>
        <strain>K12</strain>
    </source>
</reference>
<reference key="2">
    <citation type="submission" date="1997-01" db="EMBL/GenBank/DDBJ databases">
        <title>Sequence of minutes 4-25 of Escherichia coli.</title>
        <authorList>
            <person name="Chung E."/>
            <person name="Allen E."/>
            <person name="Araujo R."/>
            <person name="Aparicio A.M."/>
            <person name="Davis K."/>
            <person name="Duncan M."/>
            <person name="Federspiel N."/>
            <person name="Hyman R."/>
            <person name="Kalman S."/>
            <person name="Komp C."/>
            <person name="Kurdi O."/>
            <person name="Lew H."/>
            <person name="Lin D."/>
            <person name="Namath A."/>
            <person name="Oefner P."/>
            <person name="Roberts D."/>
            <person name="Schramm S."/>
            <person name="Davis R.W."/>
        </authorList>
    </citation>
    <scope>NUCLEOTIDE SEQUENCE [LARGE SCALE GENOMIC DNA]</scope>
    <source>
        <strain>K12 / MG1655 / ATCC 47076</strain>
    </source>
</reference>
<reference key="3">
    <citation type="journal article" date="1997" name="Science">
        <title>The complete genome sequence of Escherichia coli K-12.</title>
        <authorList>
            <person name="Blattner F.R."/>
            <person name="Plunkett G. III"/>
            <person name="Bloch C.A."/>
            <person name="Perna N.T."/>
            <person name="Burland V."/>
            <person name="Riley M."/>
            <person name="Collado-Vides J."/>
            <person name="Glasner J.D."/>
            <person name="Rode C.K."/>
            <person name="Mayhew G.F."/>
            <person name="Gregor J."/>
            <person name="Davis N.W."/>
            <person name="Kirkpatrick H.A."/>
            <person name="Goeden M.A."/>
            <person name="Rose D.J."/>
            <person name="Mau B."/>
            <person name="Shao Y."/>
        </authorList>
    </citation>
    <scope>NUCLEOTIDE SEQUENCE [LARGE SCALE GENOMIC DNA]</scope>
    <source>
        <strain>K12 / MG1655 / ATCC 47076</strain>
    </source>
</reference>
<reference key="4">
    <citation type="journal article" date="2006" name="Mol. Syst. Biol.">
        <title>Highly accurate genome sequences of Escherichia coli K-12 strains MG1655 and W3110.</title>
        <authorList>
            <person name="Hayashi K."/>
            <person name="Morooka N."/>
            <person name="Yamamoto Y."/>
            <person name="Fujita K."/>
            <person name="Isono K."/>
            <person name="Choi S."/>
            <person name="Ohtsubo E."/>
            <person name="Baba T."/>
            <person name="Wanner B.L."/>
            <person name="Mori H."/>
            <person name="Horiuchi T."/>
        </authorList>
    </citation>
    <scope>NUCLEOTIDE SEQUENCE [LARGE SCALE GENOMIC DNA]</scope>
    <source>
        <strain>K12 / W3110 / ATCC 27325 / DSM 5911</strain>
    </source>
</reference>
<reference key="5">
    <citation type="journal article" date="2005" name="Science">
        <title>Global topology analysis of the Escherichia coli inner membrane proteome.</title>
        <authorList>
            <person name="Daley D.O."/>
            <person name="Rapp M."/>
            <person name="Granseth E."/>
            <person name="Melen K."/>
            <person name="Drew D."/>
            <person name="von Heijne G."/>
        </authorList>
    </citation>
    <scope>SUBCELLULAR LOCATION</scope>
    <source>
        <strain>K12 / MG1655 / ATCC 47076</strain>
    </source>
</reference>
<organism>
    <name type="scientific">Escherichia coli (strain K12)</name>
    <dbReference type="NCBI Taxonomy" id="83333"/>
    <lineage>
        <taxon>Bacteria</taxon>
        <taxon>Pseudomonadati</taxon>
        <taxon>Pseudomonadota</taxon>
        <taxon>Gammaproteobacteria</taxon>
        <taxon>Enterobacterales</taxon>
        <taxon>Enterobacteriaceae</taxon>
        <taxon>Escherichia</taxon>
    </lineage>
</organism>
<dbReference type="EMBL" id="M23219">
    <property type="protein sequence ID" value="AAA23627.1"/>
    <property type="molecule type" value="Genomic_DNA"/>
</dbReference>
<dbReference type="EMBL" id="U73857">
    <property type="protein sequence ID" value="AAB18065.1"/>
    <property type="status" value="ALT_INIT"/>
    <property type="molecule type" value="Genomic_DNA"/>
</dbReference>
<dbReference type="EMBL" id="U00096">
    <property type="protein sequence ID" value="AAC73444.1"/>
    <property type="molecule type" value="Genomic_DNA"/>
</dbReference>
<dbReference type="EMBL" id="AP009048">
    <property type="protein sequence ID" value="BAE76123.1"/>
    <property type="molecule type" value="Genomic_DNA"/>
</dbReference>
<dbReference type="PIR" id="E64761">
    <property type="entry name" value="BVECCX"/>
</dbReference>
<dbReference type="RefSeq" id="NP_414875.1">
    <property type="nucleotide sequence ID" value="NC_000913.3"/>
</dbReference>
<dbReference type="RefSeq" id="WP_000927953.1">
    <property type="nucleotide sequence ID" value="NZ_CP047127.1"/>
</dbReference>
<dbReference type="SMR" id="P17583"/>
<dbReference type="BioGRID" id="4263183">
    <property type="interactions" value="8"/>
</dbReference>
<dbReference type="FunCoup" id="P17583">
    <property type="interactions" value="139"/>
</dbReference>
<dbReference type="STRING" id="511145.b0341"/>
<dbReference type="TCDB" id="2.A.1.17.1">
    <property type="family name" value="the major facilitator superfamily (mfs)"/>
</dbReference>
<dbReference type="PaxDb" id="511145-b0341"/>
<dbReference type="EnsemblBacteria" id="AAC73444">
    <property type="protein sequence ID" value="AAC73444"/>
    <property type="gene ID" value="b0341"/>
</dbReference>
<dbReference type="GeneID" id="946770"/>
<dbReference type="KEGG" id="ecj:JW0332"/>
<dbReference type="KEGG" id="eco:b0341"/>
<dbReference type="PATRIC" id="fig|511145.12.peg.349"/>
<dbReference type="EchoBASE" id="EB0174"/>
<dbReference type="eggNOG" id="COG2807">
    <property type="taxonomic scope" value="Bacteria"/>
</dbReference>
<dbReference type="HOGENOM" id="CLU_038046_4_0_6"/>
<dbReference type="InParanoid" id="P17583"/>
<dbReference type="OMA" id="GGYTSMV"/>
<dbReference type="PhylomeDB" id="P17583"/>
<dbReference type="BioCyc" id="EcoCyc:CYNX-MONOMER"/>
<dbReference type="PRO" id="PR:P17583"/>
<dbReference type="Proteomes" id="UP000000625">
    <property type="component" value="Chromosome"/>
</dbReference>
<dbReference type="GO" id="GO:0005886">
    <property type="term" value="C:plasma membrane"/>
    <property type="evidence" value="ECO:0000314"/>
    <property type="project" value="EcoCyc"/>
</dbReference>
<dbReference type="GO" id="GO:0022857">
    <property type="term" value="F:transmembrane transporter activity"/>
    <property type="evidence" value="ECO:0007669"/>
    <property type="project" value="InterPro"/>
</dbReference>
<dbReference type="GO" id="GO:0009440">
    <property type="term" value="P:cyanate catabolic process"/>
    <property type="evidence" value="ECO:0000270"/>
    <property type="project" value="EcoCyc"/>
</dbReference>
<dbReference type="CDD" id="cd17410">
    <property type="entry name" value="MFS_CynX_like"/>
    <property type="match status" value="1"/>
</dbReference>
<dbReference type="FunFam" id="1.20.1250.20:FF:000496">
    <property type="entry name" value="Cyanate transporter family protein"/>
    <property type="match status" value="1"/>
</dbReference>
<dbReference type="Gene3D" id="1.20.1250.20">
    <property type="entry name" value="MFS general substrate transporter like domains"/>
    <property type="match status" value="2"/>
</dbReference>
<dbReference type="InterPro" id="IPR004747">
    <property type="entry name" value="CynX-like"/>
</dbReference>
<dbReference type="InterPro" id="IPR011701">
    <property type="entry name" value="MFS"/>
</dbReference>
<dbReference type="InterPro" id="IPR052524">
    <property type="entry name" value="MFS_Cyanate_Porter"/>
</dbReference>
<dbReference type="InterPro" id="IPR020846">
    <property type="entry name" value="MFS_dom"/>
</dbReference>
<dbReference type="InterPro" id="IPR036259">
    <property type="entry name" value="MFS_trans_sf"/>
</dbReference>
<dbReference type="NCBIfam" id="TIGR00896">
    <property type="entry name" value="CynX"/>
    <property type="match status" value="1"/>
</dbReference>
<dbReference type="NCBIfam" id="NF007256">
    <property type="entry name" value="PRK09705.1"/>
    <property type="match status" value="1"/>
</dbReference>
<dbReference type="PANTHER" id="PTHR23523">
    <property type="match status" value="1"/>
</dbReference>
<dbReference type="PANTHER" id="PTHR23523:SF1">
    <property type="entry name" value="CYANATE TRANSPORT PROTEIN CYNX"/>
    <property type="match status" value="1"/>
</dbReference>
<dbReference type="Pfam" id="PF07690">
    <property type="entry name" value="MFS_1"/>
    <property type="match status" value="1"/>
</dbReference>
<dbReference type="SUPFAM" id="SSF103473">
    <property type="entry name" value="MFS general substrate transporter"/>
    <property type="match status" value="1"/>
</dbReference>
<dbReference type="PROSITE" id="PS50850">
    <property type="entry name" value="MFS"/>
    <property type="match status" value="1"/>
</dbReference>